<comment type="function">
    <text evidence="1">Specifically methylates the uridine in position 2552 of 23S rRNA at the 2'-O position of the ribose in the fully assembled 50S ribosomal subunit.</text>
</comment>
<comment type="catalytic activity">
    <reaction evidence="1">
        <text>uridine(2552) in 23S rRNA + S-adenosyl-L-methionine = 2'-O-methyluridine(2552) in 23S rRNA + S-adenosyl-L-homocysteine + H(+)</text>
        <dbReference type="Rhea" id="RHEA:42720"/>
        <dbReference type="Rhea" id="RHEA-COMP:10202"/>
        <dbReference type="Rhea" id="RHEA-COMP:10203"/>
        <dbReference type="ChEBI" id="CHEBI:15378"/>
        <dbReference type="ChEBI" id="CHEBI:57856"/>
        <dbReference type="ChEBI" id="CHEBI:59789"/>
        <dbReference type="ChEBI" id="CHEBI:65315"/>
        <dbReference type="ChEBI" id="CHEBI:74478"/>
        <dbReference type="EC" id="2.1.1.166"/>
    </reaction>
</comment>
<comment type="subcellular location">
    <subcellularLocation>
        <location evidence="1">Cytoplasm</location>
    </subcellularLocation>
</comment>
<comment type="similarity">
    <text evidence="1">Belongs to the class I-like SAM-binding methyltransferase superfamily. RNA methyltransferase RlmE family.</text>
</comment>
<evidence type="ECO:0000255" key="1">
    <source>
        <dbReference type="HAMAP-Rule" id="MF_01547"/>
    </source>
</evidence>
<evidence type="ECO:0000256" key="2">
    <source>
        <dbReference type="SAM" id="MobiDB-lite"/>
    </source>
</evidence>
<reference key="1">
    <citation type="journal article" date="2008" name="Appl. Environ. Microbiol.">
        <title>The genome of Polaromonas sp. strain JS666: insights into the evolution of a hydrocarbon- and xenobiotic-degrading bacterium, and features of relevance to biotechnology.</title>
        <authorList>
            <person name="Mattes T.E."/>
            <person name="Alexander A.K."/>
            <person name="Richardson P.M."/>
            <person name="Munk A.C."/>
            <person name="Han C.S."/>
            <person name="Stothard P."/>
            <person name="Coleman N.V."/>
        </authorList>
    </citation>
    <scope>NUCLEOTIDE SEQUENCE [LARGE SCALE GENOMIC DNA]</scope>
    <source>
        <strain>JS666 / ATCC BAA-500</strain>
    </source>
</reference>
<gene>
    <name evidence="1" type="primary">rlmE</name>
    <name evidence="1" type="synonym">ftsJ</name>
    <name evidence="1" type="synonym">rrmJ</name>
    <name type="ordered locus">Bpro_2853</name>
</gene>
<name>RLME_POLSJ</name>
<keyword id="KW-0963">Cytoplasm</keyword>
<keyword id="KW-0489">Methyltransferase</keyword>
<keyword id="KW-1185">Reference proteome</keyword>
<keyword id="KW-0698">rRNA processing</keyword>
<keyword id="KW-0949">S-adenosyl-L-methionine</keyword>
<keyword id="KW-0808">Transferase</keyword>
<dbReference type="EC" id="2.1.1.166" evidence="1"/>
<dbReference type="EMBL" id="CP000316">
    <property type="protein sequence ID" value="ABE44768.1"/>
    <property type="molecule type" value="Genomic_DNA"/>
</dbReference>
<dbReference type="RefSeq" id="WP_011483766.1">
    <property type="nucleotide sequence ID" value="NC_007948.1"/>
</dbReference>
<dbReference type="SMR" id="Q129M4"/>
<dbReference type="STRING" id="296591.Bpro_2853"/>
<dbReference type="KEGG" id="pol:Bpro_2853"/>
<dbReference type="eggNOG" id="COG0293">
    <property type="taxonomic scope" value="Bacteria"/>
</dbReference>
<dbReference type="HOGENOM" id="CLU_009422_4_1_4"/>
<dbReference type="OrthoDB" id="9790080at2"/>
<dbReference type="Proteomes" id="UP000001983">
    <property type="component" value="Chromosome"/>
</dbReference>
<dbReference type="GO" id="GO:0005737">
    <property type="term" value="C:cytoplasm"/>
    <property type="evidence" value="ECO:0007669"/>
    <property type="project" value="UniProtKB-SubCell"/>
</dbReference>
<dbReference type="GO" id="GO:0008650">
    <property type="term" value="F:rRNA (uridine-2'-O-)-methyltransferase activity"/>
    <property type="evidence" value="ECO:0007669"/>
    <property type="project" value="UniProtKB-UniRule"/>
</dbReference>
<dbReference type="FunFam" id="3.40.50.150:FF:000005">
    <property type="entry name" value="Ribosomal RNA large subunit methyltransferase E"/>
    <property type="match status" value="1"/>
</dbReference>
<dbReference type="Gene3D" id="3.40.50.150">
    <property type="entry name" value="Vaccinia Virus protein VP39"/>
    <property type="match status" value="1"/>
</dbReference>
<dbReference type="HAMAP" id="MF_01547">
    <property type="entry name" value="RNA_methyltr_E"/>
    <property type="match status" value="1"/>
</dbReference>
<dbReference type="InterPro" id="IPR050082">
    <property type="entry name" value="RNA_methyltr_RlmE"/>
</dbReference>
<dbReference type="InterPro" id="IPR002877">
    <property type="entry name" value="RNA_MeTrfase_FtsJ_dom"/>
</dbReference>
<dbReference type="InterPro" id="IPR015507">
    <property type="entry name" value="rRNA-MeTfrase_E"/>
</dbReference>
<dbReference type="InterPro" id="IPR029063">
    <property type="entry name" value="SAM-dependent_MTases_sf"/>
</dbReference>
<dbReference type="PANTHER" id="PTHR10920">
    <property type="entry name" value="RIBOSOMAL RNA METHYLTRANSFERASE"/>
    <property type="match status" value="1"/>
</dbReference>
<dbReference type="PANTHER" id="PTHR10920:SF18">
    <property type="entry name" value="RRNA METHYLTRANSFERASE 2, MITOCHONDRIAL"/>
    <property type="match status" value="1"/>
</dbReference>
<dbReference type="Pfam" id="PF01728">
    <property type="entry name" value="FtsJ"/>
    <property type="match status" value="1"/>
</dbReference>
<dbReference type="PIRSF" id="PIRSF005461">
    <property type="entry name" value="23S_rRNA_mtase"/>
    <property type="match status" value="1"/>
</dbReference>
<dbReference type="SUPFAM" id="SSF53335">
    <property type="entry name" value="S-adenosyl-L-methionine-dependent methyltransferases"/>
    <property type="match status" value="1"/>
</dbReference>
<feature type="chain" id="PRO_0000282772" description="Ribosomal RNA large subunit methyltransferase E">
    <location>
        <begin position="1"/>
        <end position="247"/>
    </location>
</feature>
<feature type="region of interest" description="Disordered" evidence="2">
    <location>
        <begin position="1"/>
        <end position="21"/>
    </location>
</feature>
<feature type="compositionally biased region" description="Basic and acidic residues" evidence="2">
    <location>
        <begin position="8"/>
        <end position="17"/>
    </location>
</feature>
<feature type="active site" description="Proton acceptor" evidence="1">
    <location>
        <position position="193"/>
    </location>
</feature>
<feature type="binding site" evidence="1">
    <location>
        <position position="80"/>
    </location>
    <ligand>
        <name>S-adenosyl-L-methionine</name>
        <dbReference type="ChEBI" id="CHEBI:59789"/>
    </ligand>
</feature>
<feature type="binding site" evidence="1">
    <location>
        <position position="82"/>
    </location>
    <ligand>
        <name>S-adenosyl-L-methionine</name>
        <dbReference type="ChEBI" id="CHEBI:59789"/>
    </ligand>
</feature>
<feature type="binding site" evidence="1">
    <location>
        <position position="108"/>
    </location>
    <ligand>
        <name>S-adenosyl-L-methionine</name>
        <dbReference type="ChEBI" id="CHEBI:59789"/>
    </ligand>
</feature>
<feature type="binding site" evidence="1">
    <location>
        <position position="124"/>
    </location>
    <ligand>
        <name>S-adenosyl-L-methionine</name>
        <dbReference type="ChEBI" id="CHEBI:59789"/>
    </ligand>
</feature>
<feature type="binding site" evidence="1">
    <location>
        <position position="153"/>
    </location>
    <ligand>
        <name>S-adenosyl-L-methionine</name>
        <dbReference type="ChEBI" id="CHEBI:59789"/>
    </ligand>
</feature>
<organism>
    <name type="scientific">Polaromonas sp. (strain JS666 / ATCC BAA-500)</name>
    <dbReference type="NCBI Taxonomy" id="296591"/>
    <lineage>
        <taxon>Bacteria</taxon>
        <taxon>Pseudomonadati</taxon>
        <taxon>Pseudomonadota</taxon>
        <taxon>Betaproteobacteria</taxon>
        <taxon>Burkholderiales</taxon>
        <taxon>Comamonadaceae</taxon>
        <taxon>Polaromonas</taxon>
    </lineage>
</organism>
<sequence length="247" mass="27071">MKVNPKNSPKDNLKDSPKVSARGKKVNKAWLHDHINDPYVKLAQKEGYRARAAYKLKEIDETLGLIKPGDCVVDLGSTPGAWSQYVRRKLSPTGAAAGELNGRIIGLDMLPMEPIEGVAFIQGDFREPEVLQKLEQALATDKGQVKVDLVISDMAPNLSGIESADAARIVHLVELAVEFAQNRMKPDGTLVVKLFHGSGYDELVKLFRATFKVVKPMKPKASRSNSSETFLVGKGLKKRAETVPELA</sequence>
<protein>
    <recommendedName>
        <fullName evidence="1">Ribosomal RNA large subunit methyltransferase E</fullName>
        <ecNumber evidence="1">2.1.1.166</ecNumber>
    </recommendedName>
    <alternativeName>
        <fullName evidence="1">23S rRNA Um2552 methyltransferase</fullName>
    </alternativeName>
    <alternativeName>
        <fullName evidence="1">rRNA (uridine-2'-O-)-methyltransferase</fullName>
    </alternativeName>
</protein>
<accession>Q129M4</accession>
<proteinExistence type="inferred from homology"/>